<accession>C0HK96</accession>
<organism evidence="2">
    <name type="scientific">Olea europaea</name>
    <name type="common">Common olive</name>
    <dbReference type="NCBI Taxonomy" id="4146"/>
    <lineage>
        <taxon>Eukaryota</taxon>
        <taxon>Viridiplantae</taxon>
        <taxon>Streptophyta</taxon>
        <taxon>Embryophyta</taxon>
        <taxon>Tracheophyta</taxon>
        <taxon>Spermatophyta</taxon>
        <taxon>Magnoliopsida</taxon>
        <taxon>eudicotyledons</taxon>
        <taxon>Gunneridae</taxon>
        <taxon>Pentapetalae</taxon>
        <taxon>asterids</taxon>
        <taxon>lamiids</taxon>
        <taxon>Lamiales</taxon>
        <taxon>Oleaceae</taxon>
        <taxon>Oleeae</taxon>
        <taxon>Olea</taxon>
    </lineage>
</organism>
<feature type="chain" id="PRO_0000438727" description="Uncharacterized protein 1">
    <location>
        <begin position="1" status="less than"/>
        <end position="14" status="greater than"/>
    </location>
</feature>
<feature type="unsure residue" description="L or I" evidence="1">
    <location>
        <position position="2"/>
    </location>
</feature>
<feature type="unsure residue" description="L or I" evidence="1">
    <location>
        <position position="13"/>
    </location>
</feature>
<feature type="non-terminal residue" evidence="2">
    <location>
        <position position="1"/>
    </location>
</feature>
<feature type="non-terminal residue" evidence="2">
    <location>
        <position position="14"/>
    </location>
</feature>
<sequence>VLADVYNVEPETLR</sequence>
<proteinExistence type="evidence at protein level"/>
<evidence type="ECO:0000269" key="1">
    <source ref="1"/>
</evidence>
<evidence type="ECO:0000303" key="2">
    <source ref="1"/>
</evidence>
<evidence type="ECO:0000305" key="3"/>
<protein>
    <recommendedName>
        <fullName evidence="3">Uncharacterized protein 1</fullName>
    </recommendedName>
</protein>
<keyword id="KW-0903">Direct protein sequencing</keyword>
<name>Y0001_OLEEU</name>
<reference evidence="3" key="1">
    <citation type="submission" date="2016-10" db="UniProtKB">
        <title>Study on the differential proteins isolated from autochtone Olea europaea L. species in kermanshah, Iran.</title>
        <authorList>
            <person name="Tahmasebi S.E."/>
            <person name="Akbari L."/>
            <person name="Monazzah M."/>
        </authorList>
    </citation>
    <scope>PROTEIN SEQUENCE</scope>
    <scope>MASS SPECTROMETRY</scope>
    <scope>IDENTIFICATION BY MASS SPECTROMETRY</scope>
    <source>
        <tissue evidence="2">Seed</tissue>
    </source>
</reference>